<name>PYRD_THEVB</name>
<accession>Q8DLB7</accession>
<sequence>MAIDPYRHLLRPLLFSGLQADPELLHQQFLSLCGWLNQDRSLCTWLRQQLQQWYALSDPRLERQVWGLRFPNPIGLAAGFDKNGVARSVWSAFGFGFAELGTVTWHPQPGNPRPRLFRLGSDRAVINRMGFNNAGAEAMAASLERSPPASIPIGINLGKSKITPLAAAKEDYLASFRRLHPLGDYFVINVSSPNTPGLRDLQAKEQLAPILETLQSANHPRKPLLLKIAPDLSWEQIAAILDLVQAYELAGIVATNTTVAREGLKSQTIPQTGRSPAEEAGGLSGAPLRQRATAVIRFIHEQTQGTLPIIGVGGIFTPEDVIEKLAAGATLVQLYTGWIYQGPSLLRELLKGLLAAADQETPEK</sequence>
<dbReference type="EC" id="1.3.5.2" evidence="1"/>
<dbReference type="EMBL" id="BA000039">
    <property type="protein sequence ID" value="BAC08131.1"/>
    <property type="molecule type" value="Genomic_DNA"/>
</dbReference>
<dbReference type="RefSeq" id="NP_681369.1">
    <property type="nucleotide sequence ID" value="NC_004113.1"/>
</dbReference>
<dbReference type="RefSeq" id="WP_011056427.1">
    <property type="nucleotide sequence ID" value="NC_004113.1"/>
</dbReference>
<dbReference type="SMR" id="Q8DLB7"/>
<dbReference type="STRING" id="197221.gene:10747169"/>
<dbReference type="EnsemblBacteria" id="BAC08131">
    <property type="protein sequence ID" value="BAC08131"/>
    <property type="gene ID" value="BAC08131"/>
</dbReference>
<dbReference type="KEGG" id="tel:tll0579"/>
<dbReference type="PATRIC" id="fig|197221.4.peg.611"/>
<dbReference type="eggNOG" id="COG0167">
    <property type="taxonomic scope" value="Bacteria"/>
</dbReference>
<dbReference type="UniPathway" id="UPA00070">
    <property type="reaction ID" value="UER00946"/>
</dbReference>
<dbReference type="Proteomes" id="UP000000440">
    <property type="component" value="Chromosome"/>
</dbReference>
<dbReference type="GO" id="GO:0005737">
    <property type="term" value="C:cytoplasm"/>
    <property type="evidence" value="ECO:0007669"/>
    <property type="project" value="InterPro"/>
</dbReference>
<dbReference type="GO" id="GO:0005886">
    <property type="term" value="C:plasma membrane"/>
    <property type="evidence" value="ECO:0007669"/>
    <property type="project" value="UniProtKB-SubCell"/>
</dbReference>
<dbReference type="GO" id="GO:0106430">
    <property type="term" value="F:dihydroorotate dehydrogenase (quinone) activity"/>
    <property type="evidence" value="ECO:0007669"/>
    <property type="project" value="UniProtKB-EC"/>
</dbReference>
<dbReference type="GO" id="GO:0006207">
    <property type="term" value="P:'de novo' pyrimidine nucleobase biosynthetic process"/>
    <property type="evidence" value="ECO:0007669"/>
    <property type="project" value="InterPro"/>
</dbReference>
<dbReference type="GO" id="GO:0044205">
    <property type="term" value="P:'de novo' UMP biosynthetic process"/>
    <property type="evidence" value="ECO:0007669"/>
    <property type="project" value="UniProtKB-UniRule"/>
</dbReference>
<dbReference type="CDD" id="cd04738">
    <property type="entry name" value="DHOD_2_like"/>
    <property type="match status" value="1"/>
</dbReference>
<dbReference type="Gene3D" id="3.20.20.70">
    <property type="entry name" value="Aldolase class I"/>
    <property type="match status" value="1"/>
</dbReference>
<dbReference type="HAMAP" id="MF_00225">
    <property type="entry name" value="DHO_dh_type2"/>
    <property type="match status" value="1"/>
</dbReference>
<dbReference type="InterPro" id="IPR013785">
    <property type="entry name" value="Aldolase_TIM"/>
</dbReference>
<dbReference type="InterPro" id="IPR050074">
    <property type="entry name" value="DHO_dehydrogenase"/>
</dbReference>
<dbReference type="InterPro" id="IPR005719">
    <property type="entry name" value="Dihydroorotate_DH_2"/>
</dbReference>
<dbReference type="InterPro" id="IPR005720">
    <property type="entry name" value="Dihydroorotate_DH_cat"/>
</dbReference>
<dbReference type="InterPro" id="IPR001295">
    <property type="entry name" value="Dihydroorotate_DH_CS"/>
</dbReference>
<dbReference type="NCBIfam" id="NF003651">
    <property type="entry name" value="PRK05286.2-4"/>
    <property type="match status" value="1"/>
</dbReference>
<dbReference type="NCBIfam" id="NF003652">
    <property type="entry name" value="PRK05286.2-5"/>
    <property type="match status" value="1"/>
</dbReference>
<dbReference type="NCBIfam" id="TIGR01036">
    <property type="entry name" value="pyrD_sub2"/>
    <property type="match status" value="1"/>
</dbReference>
<dbReference type="PANTHER" id="PTHR48109:SF4">
    <property type="entry name" value="DIHYDROOROTATE DEHYDROGENASE (QUINONE), MITOCHONDRIAL"/>
    <property type="match status" value="1"/>
</dbReference>
<dbReference type="PANTHER" id="PTHR48109">
    <property type="entry name" value="DIHYDROOROTATE DEHYDROGENASE (QUINONE), MITOCHONDRIAL-RELATED"/>
    <property type="match status" value="1"/>
</dbReference>
<dbReference type="Pfam" id="PF01180">
    <property type="entry name" value="DHO_dh"/>
    <property type="match status" value="1"/>
</dbReference>
<dbReference type="SUPFAM" id="SSF51395">
    <property type="entry name" value="FMN-linked oxidoreductases"/>
    <property type="match status" value="1"/>
</dbReference>
<dbReference type="PROSITE" id="PS00911">
    <property type="entry name" value="DHODEHASE_1"/>
    <property type="match status" value="1"/>
</dbReference>
<dbReference type="PROSITE" id="PS00912">
    <property type="entry name" value="DHODEHASE_2"/>
    <property type="match status" value="1"/>
</dbReference>
<protein>
    <recommendedName>
        <fullName evidence="1">Dihydroorotate dehydrogenase (quinone)</fullName>
        <ecNumber evidence="1">1.3.5.2</ecNumber>
    </recommendedName>
    <alternativeName>
        <fullName evidence="1">DHOdehase</fullName>
        <shortName evidence="1">DHOD</shortName>
        <shortName evidence="1">DHODase</shortName>
    </alternativeName>
    <alternativeName>
        <fullName evidence="1">Dihydroorotate oxidase</fullName>
    </alternativeName>
</protein>
<feature type="chain" id="PRO_0000148478" description="Dihydroorotate dehydrogenase (quinone)">
    <location>
        <begin position="1"/>
        <end position="364"/>
    </location>
</feature>
<feature type="active site" description="Nucleophile" evidence="1">
    <location>
        <position position="192"/>
    </location>
</feature>
<feature type="binding site" evidence="1">
    <location>
        <begin position="78"/>
        <end position="82"/>
    </location>
    <ligand>
        <name>FMN</name>
        <dbReference type="ChEBI" id="CHEBI:58210"/>
    </ligand>
</feature>
<feature type="binding site" evidence="1">
    <location>
        <position position="82"/>
    </location>
    <ligand>
        <name>substrate</name>
    </ligand>
</feature>
<feature type="binding site" evidence="1">
    <location>
        <position position="102"/>
    </location>
    <ligand>
        <name>FMN</name>
        <dbReference type="ChEBI" id="CHEBI:58210"/>
    </ligand>
</feature>
<feature type="binding site" evidence="1">
    <location>
        <begin position="127"/>
        <end position="131"/>
    </location>
    <ligand>
        <name>substrate</name>
    </ligand>
</feature>
<feature type="binding site" evidence="1">
    <location>
        <position position="156"/>
    </location>
    <ligand>
        <name>FMN</name>
        <dbReference type="ChEBI" id="CHEBI:58210"/>
    </ligand>
</feature>
<feature type="binding site" evidence="1">
    <location>
        <position position="189"/>
    </location>
    <ligand>
        <name>FMN</name>
        <dbReference type="ChEBI" id="CHEBI:58210"/>
    </ligand>
</feature>
<feature type="binding site" evidence="1">
    <location>
        <position position="189"/>
    </location>
    <ligand>
        <name>substrate</name>
    </ligand>
</feature>
<feature type="binding site" evidence="1">
    <location>
        <position position="194"/>
    </location>
    <ligand>
        <name>substrate</name>
    </ligand>
</feature>
<feature type="binding site" evidence="1">
    <location>
        <position position="227"/>
    </location>
    <ligand>
        <name>FMN</name>
        <dbReference type="ChEBI" id="CHEBI:58210"/>
    </ligand>
</feature>
<feature type="binding site" evidence="1">
    <location>
        <position position="255"/>
    </location>
    <ligand>
        <name>FMN</name>
        <dbReference type="ChEBI" id="CHEBI:58210"/>
    </ligand>
</feature>
<feature type="binding site" evidence="1">
    <location>
        <begin position="256"/>
        <end position="257"/>
    </location>
    <ligand>
        <name>substrate</name>
    </ligand>
</feature>
<feature type="binding site" evidence="1">
    <location>
        <position position="285"/>
    </location>
    <ligand>
        <name>FMN</name>
        <dbReference type="ChEBI" id="CHEBI:58210"/>
    </ligand>
</feature>
<feature type="binding site" evidence="1">
    <location>
        <position position="314"/>
    </location>
    <ligand>
        <name>FMN</name>
        <dbReference type="ChEBI" id="CHEBI:58210"/>
    </ligand>
</feature>
<feature type="binding site" evidence="1">
    <location>
        <begin position="335"/>
        <end position="336"/>
    </location>
    <ligand>
        <name>FMN</name>
        <dbReference type="ChEBI" id="CHEBI:58210"/>
    </ligand>
</feature>
<organism>
    <name type="scientific">Thermosynechococcus vestitus (strain NIES-2133 / IAM M-273 / BP-1)</name>
    <dbReference type="NCBI Taxonomy" id="197221"/>
    <lineage>
        <taxon>Bacteria</taxon>
        <taxon>Bacillati</taxon>
        <taxon>Cyanobacteriota</taxon>
        <taxon>Cyanophyceae</taxon>
        <taxon>Acaryochloridales</taxon>
        <taxon>Thermosynechococcaceae</taxon>
        <taxon>Thermosynechococcus</taxon>
    </lineage>
</organism>
<gene>
    <name evidence="1" type="primary">pyrD</name>
    <name type="ordered locus">tll0579</name>
</gene>
<evidence type="ECO:0000255" key="1">
    <source>
        <dbReference type="HAMAP-Rule" id="MF_00225"/>
    </source>
</evidence>
<keyword id="KW-1003">Cell membrane</keyword>
<keyword id="KW-0285">Flavoprotein</keyword>
<keyword id="KW-0288">FMN</keyword>
<keyword id="KW-0472">Membrane</keyword>
<keyword id="KW-0560">Oxidoreductase</keyword>
<keyword id="KW-0665">Pyrimidine biosynthesis</keyword>
<keyword id="KW-1185">Reference proteome</keyword>
<proteinExistence type="inferred from homology"/>
<comment type="function">
    <text evidence="1">Catalyzes the conversion of dihydroorotate to orotate with quinone as electron acceptor.</text>
</comment>
<comment type="catalytic activity">
    <reaction evidence="1">
        <text>(S)-dihydroorotate + a quinone = orotate + a quinol</text>
        <dbReference type="Rhea" id="RHEA:30187"/>
        <dbReference type="ChEBI" id="CHEBI:24646"/>
        <dbReference type="ChEBI" id="CHEBI:30839"/>
        <dbReference type="ChEBI" id="CHEBI:30864"/>
        <dbReference type="ChEBI" id="CHEBI:132124"/>
        <dbReference type="EC" id="1.3.5.2"/>
    </reaction>
</comment>
<comment type="cofactor">
    <cofactor evidence="1">
        <name>FMN</name>
        <dbReference type="ChEBI" id="CHEBI:58210"/>
    </cofactor>
    <text evidence="1">Binds 1 FMN per subunit.</text>
</comment>
<comment type="pathway">
    <text evidence="1">Pyrimidine metabolism; UMP biosynthesis via de novo pathway; orotate from (S)-dihydroorotate (quinone route): step 1/1.</text>
</comment>
<comment type="subunit">
    <text evidence="1">Monomer.</text>
</comment>
<comment type="subcellular location">
    <subcellularLocation>
        <location evidence="1">Cell membrane</location>
        <topology evidence="1">Peripheral membrane protein</topology>
    </subcellularLocation>
</comment>
<comment type="similarity">
    <text evidence="1">Belongs to the dihydroorotate dehydrogenase family. Type 2 subfamily.</text>
</comment>
<reference key="1">
    <citation type="journal article" date="2002" name="DNA Res.">
        <title>Complete genome structure of the thermophilic cyanobacterium Thermosynechococcus elongatus BP-1.</title>
        <authorList>
            <person name="Nakamura Y."/>
            <person name="Kaneko T."/>
            <person name="Sato S."/>
            <person name="Ikeuchi M."/>
            <person name="Katoh H."/>
            <person name="Sasamoto S."/>
            <person name="Watanabe A."/>
            <person name="Iriguchi M."/>
            <person name="Kawashima K."/>
            <person name="Kimura T."/>
            <person name="Kishida Y."/>
            <person name="Kiyokawa C."/>
            <person name="Kohara M."/>
            <person name="Matsumoto M."/>
            <person name="Matsuno A."/>
            <person name="Nakazaki N."/>
            <person name="Shimpo S."/>
            <person name="Sugimoto M."/>
            <person name="Takeuchi C."/>
            <person name="Yamada M."/>
            <person name="Tabata S."/>
        </authorList>
    </citation>
    <scope>NUCLEOTIDE SEQUENCE [LARGE SCALE GENOMIC DNA]</scope>
    <source>
        <strain>NIES-2133 / IAM M-273 / BP-1</strain>
    </source>
</reference>